<protein>
    <recommendedName>
        <fullName evidence="1">Dihydroorotate dehydrogenase (quinone)</fullName>
        <ecNumber evidence="1">1.3.5.2</ecNumber>
    </recommendedName>
    <alternativeName>
        <fullName evidence="1">DHOdehase</fullName>
        <shortName evidence="1">DHOD</shortName>
        <shortName evidence="1">DHODase</shortName>
    </alternativeName>
    <alternativeName>
        <fullName evidence="1">Dihydroorotate oxidase</fullName>
    </alternativeName>
</protein>
<organism>
    <name type="scientific">Xylella fastidiosa (strain 9a5c)</name>
    <dbReference type="NCBI Taxonomy" id="160492"/>
    <lineage>
        <taxon>Bacteria</taxon>
        <taxon>Pseudomonadati</taxon>
        <taxon>Pseudomonadota</taxon>
        <taxon>Gammaproteobacteria</taxon>
        <taxon>Lysobacterales</taxon>
        <taxon>Lysobacteraceae</taxon>
        <taxon>Xylella</taxon>
    </lineage>
</organism>
<dbReference type="EC" id="1.3.5.2" evidence="1"/>
<dbReference type="EMBL" id="AE003849">
    <property type="protein sequence ID" value="AAF85368.1"/>
    <property type="status" value="ALT_INIT"/>
    <property type="molecule type" value="Genomic_DNA"/>
</dbReference>
<dbReference type="PIR" id="F82541">
    <property type="entry name" value="F82541"/>
</dbReference>
<dbReference type="RefSeq" id="WP_010894990.1">
    <property type="nucleotide sequence ID" value="NC_002488.3"/>
</dbReference>
<dbReference type="SMR" id="Q9PAE7"/>
<dbReference type="STRING" id="160492.XF_2571"/>
<dbReference type="KEGG" id="xfa:XF_2571"/>
<dbReference type="eggNOG" id="COG0167">
    <property type="taxonomic scope" value="Bacteria"/>
</dbReference>
<dbReference type="HOGENOM" id="CLU_013640_2_0_6"/>
<dbReference type="UniPathway" id="UPA00070">
    <property type="reaction ID" value="UER00946"/>
</dbReference>
<dbReference type="Proteomes" id="UP000000812">
    <property type="component" value="Chromosome"/>
</dbReference>
<dbReference type="GO" id="GO:0005737">
    <property type="term" value="C:cytoplasm"/>
    <property type="evidence" value="ECO:0007669"/>
    <property type="project" value="InterPro"/>
</dbReference>
<dbReference type="GO" id="GO:0005886">
    <property type="term" value="C:plasma membrane"/>
    <property type="evidence" value="ECO:0007669"/>
    <property type="project" value="UniProtKB-SubCell"/>
</dbReference>
<dbReference type="GO" id="GO:0106430">
    <property type="term" value="F:dihydroorotate dehydrogenase (quinone) activity"/>
    <property type="evidence" value="ECO:0007669"/>
    <property type="project" value="UniProtKB-EC"/>
</dbReference>
<dbReference type="GO" id="GO:0006207">
    <property type="term" value="P:'de novo' pyrimidine nucleobase biosynthetic process"/>
    <property type="evidence" value="ECO:0007669"/>
    <property type="project" value="InterPro"/>
</dbReference>
<dbReference type="GO" id="GO:0044205">
    <property type="term" value="P:'de novo' UMP biosynthetic process"/>
    <property type="evidence" value="ECO:0007669"/>
    <property type="project" value="UniProtKB-UniRule"/>
</dbReference>
<dbReference type="CDD" id="cd04738">
    <property type="entry name" value="DHOD_2_like"/>
    <property type="match status" value="1"/>
</dbReference>
<dbReference type="Gene3D" id="3.20.20.70">
    <property type="entry name" value="Aldolase class I"/>
    <property type="match status" value="1"/>
</dbReference>
<dbReference type="HAMAP" id="MF_00225">
    <property type="entry name" value="DHO_dh_type2"/>
    <property type="match status" value="1"/>
</dbReference>
<dbReference type="InterPro" id="IPR013785">
    <property type="entry name" value="Aldolase_TIM"/>
</dbReference>
<dbReference type="InterPro" id="IPR050074">
    <property type="entry name" value="DHO_dehydrogenase"/>
</dbReference>
<dbReference type="InterPro" id="IPR012135">
    <property type="entry name" value="Dihydroorotate_DH_1_2"/>
</dbReference>
<dbReference type="InterPro" id="IPR005719">
    <property type="entry name" value="Dihydroorotate_DH_2"/>
</dbReference>
<dbReference type="InterPro" id="IPR005720">
    <property type="entry name" value="Dihydroorotate_DH_cat"/>
</dbReference>
<dbReference type="InterPro" id="IPR001295">
    <property type="entry name" value="Dihydroorotate_DH_CS"/>
</dbReference>
<dbReference type="NCBIfam" id="NF003645">
    <property type="entry name" value="PRK05286.1-2"/>
    <property type="match status" value="1"/>
</dbReference>
<dbReference type="NCBIfam" id="NF003646">
    <property type="entry name" value="PRK05286.1-4"/>
    <property type="match status" value="1"/>
</dbReference>
<dbReference type="NCBIfam" id="NF003652">
    <property type="entry name" value="PRK05286.2-5"/>
    <property type="match status" value="1"/>
</dbReference>
<dbReference type="NCBIfam" id="TIGR01036">
    <property type="entry name" value="pyrD_sub2"/>
    <property type="match status" value="1"/>
</dbReference>
<dbReference type="PANTHER" id="PTHR48109:SF4">
    <property type="entry name" value="DIHYDROOROTATE DEHYDROGENASE (QUINONE), MITOCHONDRIAL"/>
    <property type="match status" value="1"/>
</dbReference>
<dbReference type="PANTHER" id="PTHR48109">
    <property type="entry name" value="DIHYDROOROTATE DEHYDROGENASE (QUINONE), MITOCHONDRIAL-RELATED"/>
    <property type="match status" value="1"/>
</dbReference>
<dbReference type="Pfam" id="PF01180">
    <property type="entry name" value="DHO_dh"/>
    <property type="match status" value="1"/>
</dbReference>
<dbReference type="PIRSF" id="PIRSF000164">
    <property type="entry name" value="DHO_oxidase"/>
    <property type="match status" value="1"/>
</dbReference>
<dbReference type="SUPFAM" id="SSF51395">
    <property type="entry name" value="FMN-linked oxidoreductases"/>
    <property type="match status" value="1"/>
</dbReference>
<dbReference type="PROSITE" id="PS00911">
    <property type="entry name" value="DHODEHASE_1"/>
    <property type="match status" value="1"/>
</dbReference>
<keyword id="KW-1003">Cell membrane</keyword>
<keyword id="KW-0285">Flavoprotein</keyword>
<keyword id="KW-0288">FMN</keyword>
<keyword id="KW-0472">Membrane</keyword>
<keyword id="KW-0560">Oxidoreductase</keyword>
<keyword id="KW-0665">Pyrimidine biosynthesis</keyword>
<comment type="function">
    <text evidence="1">Catalyzes the conversion of dihydroorotate to orotate with quinone as electron acceptor.</text>
</comment>
<comment type="catalytic activity">
    <reaction evidence="1">
        <text>(S)-dihydroorotate + a quinone = orotate + a quinol</text>
        <dbReference type="Rhea" id="RHEA:30187"/>
        <dbReference type="ChEBI" id="CHEBI:24646"/>
        <dbReference type="ChEBI" id="CHEBI:30839"/>
        <dbReference type="ChEBI" id="CHEBI:30864"/>
        <dbReference type="ChEBI" id="CHEBI:132124"/>
        <dbReference type="EC" id="1.3.5.2"/>
    </reaction>
</comment>
<comment type="cofactor">
    <cofactor evidence="1">
        <name>FMN</name>
        <dbReference type="ChEBI" id="CHEBI:58210"/>
    </cofactor>
    <text evidence="1">Binds 1 FMN per subunit.</text>
</comment>
<comment type="pathway">
    <text evidence="1">Pyrimidine metabolism; UMP biosynthesis via de novo pathway; orotate from (S)-dihydroorotate (quinone route): step 1/1.</text>
</comment>
<comment type="subunit">
    <text evidence="1">Monomer.</text>
</comment>
<comment type="subcellular location">
    <subcellularLocation>
        <location evidence="1">Cell membrane</location>
        <topology evidence="1">Peripheral membrane protein</topology>
    </subcellularLocation>
</comment>
<comment type="similarity">
    <text evidence="1">Belongs to the dihydroorotate dehydrogenase family. Type 2 subfamily.</text>
</comment>
<comment type="sequence caution" evidence="2">
    <conflict type="erroneous initiation">
        <sequence resource="EMBL-CDS" id="AAF85368"/>
    </conflict>
</comment>
<feature type="chain" id="PRO_0000148492" description="Dihydroorotate dehydrogenase (quinone)">
    <location>
        <begin position="1"/>
        <end position="351"/>
    </location>
</feature>
<feature type="active site" description="Nucleophile" evidence="1">
    <location>
        <position position="175"/>
    </location>
</feature>
<feature type="binding site" evidence="1">
    <location>
        <begin position="61"/>
        <end position="65"/>
    </location>
    <ligand>
        <name>FMN</name>
        <dbReference type="ChEBI" id="CHEBI:58210"/>
    </ligand>
</feature>
<feature type="binding site" evidence="1">
    <location>
        <position position="65"/>
    </location>
    <ligand>
        <name>substrate</name>
    </ligand>
</feature>
<feature type="binding site" evidence="1">
    <location>
        <position position="85"/>
    </location>
    <ligand>
        <name>FMN</name>
        <dbReference type="ChEBI" id="CHEBI:58210"/>
    </ligand>
</feature>
<feature type="binding site" evidence="1">
    <location>
        <begin position="110"/>
        <end position="114"/>
    </location>
    <ligand>
        <name>substrate</name>
    </ligand>
</feature>
<feature type="binding site" evidence="1">
    <location>
        <position position="139"/>
    </location>
    <ligand>
        <name>FMN</name>
        <dbReference type="ChEBI" id="CHEBI:58210"/>
    </ligand>
</feature>
<feature type="binding site" evidence="1">
    <location>
        <position position="172"/>
    </location>
    <ligand>
        <name>FMN</name>
        <dbReference type="ChEBI" id="CHEBI:58210"/>
    </ligand>
</feature>
<feature type="binding site" evidence="1">
    <location>
        <position position="172"/>
    </location>
    <ligand>
        <name>substrate</name>
    </ligand>
</feature>
<feature type="binding site" evidence="1">
    <location>
        <position position="177"/>
    </location>
    <ligand>
        <name>substrate</name>
    </ligand>
</feature>
<feature type="binding site" evidence="1">
    <location>
        <position position="217"/>
    </location>
    <ligand>
        <name>FMN</name>
        <dbReference type="ChEBI" id="CHEBI:58210"/>
    </ligand>
</feature>
<feature type="binding site" evidence="1">
    <location>
        <position position="245"/>
    </location>
    <ligand>
        <name>FMN</name>
        <dbReference type="ChEBI" id="CHEBI:58210"/>
    </ligand>
</feature>
<feature type="binding site" evidence="1">
    <location>
        <begin position="246"/>
        <end position="247"/>
    </location>
    <ligand>
        <name>substrate</name>
    </ligand>
</feature>
<feature type="binding site" evidence="1">
    <location>
        <position position="268"/>
    </location>
    <ligand>
        <name>FMN</name>
        <dbReference type="ChEBI" id="CHEBI:58210"/>
    </ligand>
</feature>
<feature type="binding site" evidence="1">
    <location>
        <position position="297"/>
    </location>
    <ligand>
        <name>FMN</name>
        <dbReference type="ChEBI" id="CHEBI:58210"/>
    </ligand>
</feature>
<feature type="binding site" evidence="1">
    <location>
        <begin position="318"/>
        <end position="319"/>
    </location>
    <ligand>
        <name>FMN</name>
        <dbReference type="ChEBI" id="CHEBI:58210"/>
    </ligand>
</feature>
<proteinExistence type="inferred from homology"/>
<accession>Q9PAE7</accession>
<reference key="1">
    <citation type="journal article" date="2000" name="Nature">
        <title>The genome sequence of the plant pathogen Xylella fastidiosa.</title>
        <authorList>
            <person name="Simpson A.J.G."/>
            <person name="Reinach F.C."/>
            <person name="Arruda P."/>
            <person name="Abreu F.A."/>
            <person name="Acencio M."/>
            <person name="Alvarenga R."/>
            <person name="Alves L.M.C."/>
            <person name="Araya J.E."/>
            <person name="Baia G.S."/>
            <person name="Baptista C.S."/>
            <person name="Barros M.H."/>
            <person name="Bonaccorsi E.D."/>
            <person name="Bordin S."/>
            <person name="Bove J.M."/>
            <person name="Briones M.R.S."/>
            <person name="Bueno M.R.P."/>
            <person name="Camargo A.A."/>
            <person name="Camargo L.E.A."/>
            <person name="Carraro D.M."/>
            <person name="Carrer H."/>
            <person name="Colauto N.B."/>
            <person name="Colombo C."/>
            <person name="Costa F.F."/>
            <person name="Costa M.C.R."/>
            <person name="Costa-Neto C.M."/>
            <person name="Coutinho L.L."/>
            <person name="Cristofani M."/>
            <person name="Dias-Neto E."/>
            <person name="Docena C."/>
            <person name="El-Dorry H."/>
            <person name="Facincani A.P."/>
            <person name="Ferreira A.J.S."/>
            <person name="Ferreira V.C.A."/>
            <person name="Ferro J.A."/>
            <person name="Fraga J.S."/>
            <person name="Franca S.C."/>
            <person name="Franco M.C."/>
            <person name="Frohme M."/>
            <person name="Furlan L.R."/>
            <person name="Garnier M."/>
            <person name="Goldman G.H."/>
            <person name="Goldman M.H.S."/>
            <person name="Gomes S.L."/>
            <person name="Gruber A."/>
            <person name="Ho P.L."/>
            <person name="Hoheisel J.D."/>
            <person name="Junqueira M.L."/>
            <person name="Kemper E.L."/>
            <person name="Kitajima J.P."/>
            <person name="Krieger J.E."/>
            <person name="Kuramae E.E."/>
            <person name="Laigret F."/>
            <person name="Lambais M.R."/>
            <person name="Leite L.C.C."/>
            <person name="Lemos E.G.M."/>
            <person name="Lemos M.V.F."/>
            <person name="Lopes S.A."/>
            <person name="Lopes C.R."/>
            <person name="Machado J.A."/>
            <person name="Machado M.A."/>
            <person name="Madeira A.M.B.N."/>
            <person name="Madeira H.M.F."/>
            <person name="Marino C.L."/>
            <person name="Marques M.V."/>
            <person name="Martins E.A.L."/>
            <person name="Martins E.M.F."/>
            <person name="Matsukuma A.Y."/>
            <person name="Menck C.F.M."/>
            <person name="Miracca E.C."/>
            <person name="Miyaki C.Y."/>
            <person name="Monteiro-Vitorello C.B."/>
            <person name="Moon D.H."/>
            <person name="Nagai M.A."/>
            <person name="Nascimento A.L.T.O."/>
            <person name="Netto L.E.S."/>
            <person name="Nhani A. Jr."/>
            <person name="Nobrega F.G."/>
            <person name="Nunes L.R."/>
            <person name="Oliveira M.A."/>
            <person name="de Oliveira M.C."/>
            <person name="de Oliveira R.C."/>
            <person name="Palmieri D.A."/>
            <person name="Paris A."/>
            <person name="Peixoto B.R."/>
            <person name="Pereira G.A.G."/>
            <person name="Pereira H.A. Jr."/>
            <person name="Pesquero J.B."/>
            <person name="Quaggio R.B."/>
            <person name="Roberto P.G."/>
            <person name="Rodrigues V."/>
            <person name="de Rosa A.J.M."/>
            <person name="de Rosa V.E. Jr."/>
            <person name="de Sa R.G."/>
            <person name="Santelli R.V."/>
            <person name="Sawasaki H.E."/>
            <person name="da Silva A.C.R."/>
            <person name="da Silva A.M."/>
            <person name="da Silva F.R."/>
            <person name="Silva W.A. Jr."/>
            <person name="da Silveira J.F."/>
            <person name="Silvestri M.L.Z."/>
            <person name="Siqueira W.J."/>
            <person name="de Souza A.A."/>
            <person name="de Souza A.P."/>
            <person name="Terenzi M.F."/>
            <person name="Truffi D."/>
            <person name="Tsai S.M."/>
            <person name="Tsuhako M.H."/>
            <person name="Vallada H."/>
            <person name="Van Sluys M.A."/>
            <person name="Verjovski-Almeida S."/>
            <person name="Vettore A.L."/>
            <person name="Zago M.A."/>
            <person name="Zatz M."/>
            <person name="Meidanis J."/>
            <person name="Setubal J.C."/>
        </authorList>
    </citation>
    <scope>NUCLEOTIDE SEQUENCE [LARGE SCALE GENOMIC DNA]</scope>
    <source>
        <strain>9a5c</strain>
    </source>
</reference>
<sequence length="351" mass="37890">MYSLFRPLLFTCDTERAHDISLCTLDIAYHSGALPLLTRHPRPLPTTAFGLNFPNPVGLAAGLDKNGTHIDALFALGFGFIEIGTTTPRPQPGNPKPRLFRLTQQQAVINRMGFNNLGVDALVRNVAGARQRNGPLGINIGKNKDTPNEQASNDYRYCLERVYALADYVTINLSSPNTAGLRALQEEQTLRRLIGELREAQETLAAKHGRHVPMLIKMAPDLSDSDIDAAARVLNEMSVDGVIATNTTVTRPLLRQHRLASETGGLSGAPLLGQSTLVLRRLRTHLPETIALIGVGGICCGADAVAKMAAGANLVQCYTGLIFKGPQLVGECVEAIRRRREASSSGRASTQ</sequence>
<name>PYRD_XYLFA</name>
<evidence type="ECO:0000255" key="1">
    <source>
        <dbReference type="HAMAP-Rule" id="MF_00225"/>
    </source>
</evidence>
<evidence type="ECO:0000305" key="2"/>
<gene>
    <name evidence="1" type="primary">pyrD</name>
    <name type="ordered locus">XF_2571</name>
</gene>